<feature type="chain" id="PRO_0000446875" description="Protein BTH_I0359">
    <location>
        <begin position="1"/>
        <end position="85"/>
    </location>
</feature>
<comment type="disruption phenotype">
    <text evidence="1">Disruption confers partial resistance to cellular contact-dependent growth inhibition (CDI) CdiA-2 of B.pseudomallei strain 1026b, but not to endogenous CdiA. Increased binding to B.pseudomallei strain 1026b inhibitor cells.</text>
</comment>
<dbReference type="EMBL" id="CP000086">
    <property type="protein sequence ID" value="ABC36585.1"/>
    <property type="molecule type" value="Genomic_DNA"/>
</dbReference>
<dbReference type="RefSeq" id="WP_009893251.1">
    <property type="nucleotide sequence ID" value="NZ_CP008785.1"/>
</dbReference>
<dbReference type="SMR" id="Q2T1N2"/>
<dbReference type="KEGG" id="bte:BTH_I0359"/>
<dbReference type="HOGENOM" id="CLU_147865_1_0_4"/>
<dbReference type="Proteomes" id="UP000001930">
    <property type="component" value="Chromosome I"/>
</dbReference>
<dbReference type="InterPro" id="IPR021951">
    <property type="entry name" value="DUF3567"/>
</dbReference>
<dbReference type="Pfam" id="PF12091">
    <property type="entry name" value="DUF3567"/>
    <property type="match status" value="1"/>
</dbReference>
<reference key="1">
    <citation type="journal article" date="2005" name="BMC Genomics">
        <title>Bacterial genome adaptation to niches: divergence of the potential virulence genes in three Burkholderia species of different survival strategies.</title>
        <authorList>
            <person name="Kim H.S."/>
            <person name="Schell M.A."/>
            <person name="Yu Y."/>
            <person name="Ulrich R.L."/>
            <person name="Sarria S.H."/>
            <person name="Nierman W.C."/>
            <person name="DeShazer D."/>
        </authorList>
    </citation>
    <scope>NUCLEOTIDE SEQUENCE [LARGE SCALE GENOMIC DNA]</scope>
    <source>
        <strain>ATCC 700388 / DSM 13276 / CCUG 48851 / CIP 106301 / E264</strain>
    </source>
</reference>
<reference key="2">
    <citation type="journal article" date="2015" name="PLoS ONE">
        <title>Genetic analysis of the CDI pathway from Burkholderia pseudomallei 1026b.</title>
        <authorList>
            <person name="Koskiniemi S."/>
            <person name="Garza-Sanchez F."/>
            <person name="Edman N."/>
            <person name="Chaudhuri S."/>
            <person name="Poole S.J."/>
            <person name="Manoil C."/>
            <person name="Hayes C.S."/>
            <person name="Low D.A."/>
        </authorList>
    </citation>
    <scope>DISRUPTION PHENOTYPE</scope>
    <source>
        <strain>ATCC 700388 / DSM 13276 / CCUG 48851 / CIP 106301 / E264</strain>
    </source>
</reference>
<evidence type="ECO:0000269" key="1">
    <source>
    </source>
</evidence>
<protein>
    <recommendedName>
        <fullName>Protein BTH_I0359</fullName>
    </recommendedName>
</protein>
<organism>
    <name type="scientific">Burkholderia thailandensis (strain ATCC 700388 / DSM 13276 / CCUG 48851 / CIP 106301 / E264)</name>
    <dbReference type="NCBI Taxonomy" id="271848"/>
    <lineage>
        <taxon>Bacteria</taxon>
        <taxon>Pseudomonadati</taxon>
        <taxon>Pseudomonadota</taxon>
        <taxon>Betaproteobacteria</taxon>
        <taxon>Burkholderiales</taxon>
        <taxon>Burkholderiaceae</taxon>
        <taxon>Burkholderia</taxon>
        <taxon>pseudomallei group</taxon>
    </lineage>
</organism>
<name>Y359_BURTA</name>
<sequence length="85" mass="9736">MQMIYNSPNYCVVEFPPQDGHHAMNSGGYEIVDKNAQREIFIDGELAARFREHVKQLIQAEPSLDEVDEFLGQFDSLMTQPVVLH</sequence>
<accession>Q2T1N2</accession>
<proteinExistence type="predicted"/>
<gene>
    <name type="ordered locus">BTH_I0359</name>
</gene>